<comment type="function">
    <text evidence="1">One of the components of the core complex of photosystem II (PSII). PSII is a light-driven water:plastoquinone oxidoreductase that uses light energy to abstract electrons from H(2)O, generating O(2) and a proton gradient subsequently used for ATP formation. It consists of a core antenna complex that captures photons, and an electron transfer chain that converts photonic excitation into a charge separation. This subunit is found at the monomer-monomer interface.</text>
</comment>
<comment type="subunit">
    <text evidence="1">PSII is composed of 1 copy each of membrane proteins PsbA, PsbB, PsbC, PsbD, PsbE, PsbF, PsbH, PsbI, PsbJ, PsbK, PsbL, PsbM, PsbT, PsbX, PsbY, PsbZ, Psb30/Ycf12, at least 3 peripheral proteins of the oxygen-evolving complex and a large number of cofactors. It forms dimeric complexes.</text>
</comment>
<comment type="subcellular location">
    <subcellularLocation>
        <location evidence="1">Plastid</location>
        <location evidence="1">Chloroplast thylakoid membrane</location>
        <topology evidence="1">Single-pass membrane protein</topology>
    </subcellularLocation>
</comment>
<comment type="similarity">
    <text evidence="1">Belongs to the PsbM family.</text>
</comment>
<feature type="chain" id="PRO_0000276261" description="Photosystem II reaction center protein M">
    <location>
        <begin position="1"/>
        <end position="34"/>
    </location>
</feature>
<feature type="transmembrane region" description="Helical" evidence="1">
    <location>
        <begin position="5"/>
        <end position="25"/>
    </location>
</feature>
<gene>
    <name evidence="1" type="primary">psbM</name>
</gene>
<sequence>MEVNILAFIATALFILVPTAFLLIIYVKTVSQNN</sequence>
<keyword id="KW-0150">Chloroplast</keyword>
<keyword id="KW-0472">Membrane</keyword>
<keyword id="KW-0602">Photosynthesis</keyword>
<keyword id="KW-0604">Photosystem II</keyword>
<keyword id="KW-0934">Plastid</keyword>
<keyword id="KW-0674">Reaction center</keyword>
<keyword id="KW-1185">Reference proteome</keyword>
<keyword id="KW-0793">Thylakoid</keyword>
<keyword id="KW-0812">Transmembrane</keyword>
<keyword id="KW-1133">Transmembrane helix</keyword>
<name>PSBM_VITVI</name>
<organism>
    <name type="scientific">Vitis vinifera</name>
    <name type="common">Grape</name>
    <dbReference type="NCBI Taxonomy" id="29760"/>
    <lineage>
        <taxon>Eukaryota</taxon>
        <taxon>Viridiplantae</taxon>
        <taxon>Streptophyta</taxon>
        <taxon>Embryophyta</taxon>
        <taxon>Tracheophyta</taxon>
        <taxon>Spermatophyta</taxon>
        <taxon>Magnoliopsida</taxon>
        <taxon>eudicotyledons</taxon>
        <taxon>Gunneridae</taxon>
        <taxon>Pentapetalae</taxon>
        <taxon>rosids</taxon>
        <taxon>Vitales</taxon>
        <taxon>Vitaceae</taxon>
        <taxon>Viteae</taxon>
        <taxon>Vitis</taxon>
    </lineage>
</organism>
<accession>Q0ZJ26</accession>
<evidence type="ECO:0000255" key="1">
    <source>
        <dbReference type="HAMAP-Rule" id="MF_00438"/>
    </source>
</evidence>
<protein>
    <recommendedName>
        <fullName evidence="1">Photosystem II reaction center protein M</fullName>
        <shortName evidence="1">PSII-M</shortName>
    </recommendedName>
</protein>
<reference key="1">
    <citation type="journal article" date="2006" name="BMC Evol. Biol.">
        <title>Phylogenetic analyses of Vitis (Vitaceae) based on complete chloroplast genome sequences: effects of taxon sampling and phylogenetic methods on resolving relationships among rosids.</title>
        <authorList>
            <person name="Jansen R.K."/>
            <person name="Kaittanis C."/>
            <person name="Lee S.-B."/>
            <person name="Saski C."/>
            <person name="Tomkins J."/>
            <person name="Alverson A.J."/>
            <person name="Daniell H."/>
        </authorList>
    </citation>
    <scope>NUCLEOTIDE SEQUENCE [LARGE SCALE GENOMIC DNA]</scope>
    <source>
        <strain>cv. Maxxa</strain>
    </source>
</reference>
<dbReference type="EMBL" id="DQ424856">
    <property type="protein sequence ID" value="ABE47528.1"/>
    <property type="molecule type" value="Genomic_DNA"/>
</dbReference>
<dbReference type="RefSeq" id="YP_567070.1">
    <property type="nucleotide sequence ID" value="NC_007957.1"/>
</dbReference>
<dbReference type="SMR" id="Q0ZJ26"/>
<dbReference type="FunCoup" id="Q0ZJ26">
    <property type="interactions" value="35"/>
</dbReference>
<dbReference type="STRING" id="29760.Q0ZJ26"/>
<dbReference type="PaxDb" id="29760-VIT_18s0001g12070.t01"/>
<dbReference type="GeneID" id="4025102"/>
<dbReference type="KEGG" id="vvi:4025102"/>
<dbReference type="eggNOG" id="ENOG502SD7U">
    <property type="taxonomic scope" value="Eukaryota"/>
</dbReference>
<dbReference type="InParanoid" id="Q0ZJ26"/>
<dbReference type="OrthoDB" id="173943at71240"/>
<dbReference type="Proteomes" id="UP000009183">
    <property type="component" value="Chloroplast"/>
</dbReference>
<dbReference type="GO" id="GO:0009535">
    <property type="term" value="C:chloroplast thylakoid membrane"/>
    <property type="evidence" value="ECO:0007669"/>
    <property type="project" value="UniProtKB-SubCell"/>
</dbReference>
<dbReference type="GO" id="GO:0009523">
    <property type="term" value="C:photosystem II"/>
    <property type="evidence" value="ECO:0007669"/>
    <property type="project" value="UniProtKB-KW"/>
</dbReference>
<dbReference type="GO" id="GO:0019684">
    <property type="term" value="P:photosynthesis, light reaction"/>
    <property type="evidence" value="ECO:0007669"/>
    <property type="project" value="InterPro"/>
</dbReference>
<dbReference type="HAMAP" id="MF_00438">
    <property type="entry name" value="PSII_PsbM"/>
    <property type="match status" value="1"/>
</dbReference>
<dbReference type="InterPro" id="IPR007826">
    <property type="entry name" value="PSII_PsbM"/>
</dbReference>
<dbReference type="InterPro" id="IPR037269">
    <property type="entry name" value="PSII_PsbM_sf"/>
</dbReference>
<dbReference type="NCBIfam" id="TIGR03038">
    <property type="entry name" value="PS_II_psbM"/>
    <property type="match status" value="1"/>
</dbReference>
<dbReference type="PANTHER" id="PTHR35774">
    <property type="entry name" value="PHOTOSYSTEM II REACTION CENTER PROTEIN M"/>
    <property type="match status" value="1"/>
</dbReference>
<dbReference type="PANTHER" id="PTHR35774:SF1">
    <property type="entry name" value="PHOTOSYSTEM II REACTION CENTER PROTEIN M"/>
    <property type="match status" value="1"/>
</dbReference>
<dbReference type="Pfam" id="PF05151">
    <property type="entry name" value="PsbM"/>
    <property type="match status" value="1"/>
</dbReference>
<dbReference type="SUPFAM" id="SSF161033">
    <property type="entry name" value="Photosystem II reaction center protein M, PsbM"/>
    <property type="match status" value="1"/>
</dbReference>
<proteinExistence type="inferred from homology"/>
<geneLocation type="chloroplast"/>